<proteinExistence type="inferred from homology"/>
<accession>Q3JWR7</accession>
<keyword id="KW-0067">ATP-binding</keyword>
<keyword id="KW-0093">Biotin biosynthesis</keyword>
<keyword id="KW-0963">Cytoplasm</keyword>
<keyword id="KW-0436">Ligase</keyword>
<keyword id="KW-0460">Magnesium</keyword>
<keyword id="KW-0479">Metal-binding</keyword>
<keyword id="KW-0547">Nucleotide-binding</keyword>
<sequence length="240" mass="24908">MSAPLSLFVTGTDTEIGKTFVSAALLHGFARAGLRAAAMKPVAAGAYERDGAWRNEDADQLDAAANVALPAAIRTPFLLKAPAAPHIVAAREGVALDIGTIVDAHRRACEMADVIVVEGVGGFRVPLADTRDTADLAVALGLPVVLVVGVRLGCISHALLTAEAIAARGLPLAGWVANRIDPAMPFADDNVDTLRAWLEREHRAPLLGALAHMSPPSPDAASHALDVNLLLNALRAAAPR</sequence>
<comment type="function">
    <text evidence="1">Catalyzes a mechanistically unusual reaction, the ATP-dependent insertion of CO2 between the N7 and N8 nitrogen atoms of 7,8-diaminopelargonic acid (DAPA, also called 7,8-diammoniononanoate) to form a ureido ring.</text>
</comment>
<comment type="catalytic activity">
    <reaction evidence="1">
        <text>(7R,8S)-7,8-diammoniononanoate + CO2 + ATP = (4R,5S)-dethiobiotin + ADP + phosphate + 3 H(+)</text>
        <dbReference type="Rhea" id="RHEA:15805"/>
        <dbReference type="ChEBI" id="CHEBI:15378"/>
        <dbReference type="ChEBI" id="CHEBI:16526"/>
        <dbReference type="ChEBI" id="CHEBI:30616"/>
        <dbReference type="ChEBI" id="CHEBI:43474"/>
        <dbReference type="ChEBI" id="CHEBI:149469"/>
        <dbReference type="ChEBI" id="CHEBI:149473"/>
        <dbReference type="ChEBI" id="CHEBI:456216"/>
        <dbReference type="EC" id="6.3.3.3"/>
    </reaction>
</comment>
<comment type="cofactor">
    <cofactor evidence="1">
        <name>Mg(2+)</name>
        <dbReference type="ChEBI" id="CHEBI:18420"/>
    </cofactor>
</comment>
<comment type="pathway">
    <text evidence="1">Cofactor biosynthesis; biotin biosynthesis; biotin from 7,8-diaminononanoate: step 1/2.</text>
</comment>
<comment type="subunit">
    <text evidence="1">Homodimer.</text>
</comment>
<comment type="subcellular location">
    <subcellularLocation>
        <location evidence="1">Cytoplasm</location>
    </subcellularLocation>
</comment>
<comment type="similarity">
    <text evidence="1">Belongs to the dethiobiotin synthetase family.</text>
</comment>
<gene>
    <name evidence="1" type="primary">bioD</name>
    <name type="ordered locus">BURPS1710b_0572</name>
</gene>
<dbReference type="EC" id="6.3.3.3" evidence="1"/>
<dbReference type="EMBL" id="CP000124">
    <property type="protein sequence ID" value="ABA49562.1"/>
    <property type="molecule type" value="Genomic_DNA"/>
</dbReference>
<dbReference type="RefSeq" id="WP_004525971.1">
    <property type="nucleotide sequence ID" value="NC_007434.1"/>
</dbReference>
<dbReference type="SMR" id="Q3JWR7"/>
<dbReference type="EnsemblBacteria" id="ABA49562">
    <property type="protein sequence ID" value="ABA49562"/>
    <property type="gene ID" value="BURPS1710b_0572"/>
</dbReference>
<dbReference type="KEGG" id="bpm:BURPS1710b_0572"/>
<dbReference type="HOGENOM" id="CLU_072551_0_0_4"/>
<dbReference type="UniPathway" id="UPA00078">
    <property type="reaction ID" value="UER00161"/>
</dbReference>
<dbReference type="Proteomes" id="UP000002700">
    <property type="component" value="Chromosome I"/>
</dbReference>
<dbReference type="GO" id="GO:0005829">
    <property type="term" value="C:cytosol"/>
    <property type="evidence" value="ECO:0007669"/>
    <property type="project" value="TreeGrafter"/>
</dbReference>
<dbReference type="GO" id="GO:0005524">
    <property type="term" value="F:ATP binding"/>
    <property type="evidence" value="ECO:0007669"/>
    <property type="project" value="UniProtKB-UniRule"/>
</dbReference>
<dbReference type="GO" id="GO:0004141">
    <property type="term" value="F:dethiobiotin synthase activity"/>
    <property type="evidence" value="ECO:0007669"/>
    <property type="project" value="UniProtKB-UniRule"/>
</dbReference>
<dbReference type="GO" id="GO:0000287">
    <property type="term" value="F:magnesium ion binding"/>
    <property type="evidence" value="ECO:0007669"/>
    <property type="project" value="UniProtKB-UniRule"/>
</dbReference>
<dbReference type="GO" id="GO:0009102">
    <property type="term" value="P:biotin biosynthetic process"/>
    <property type="evidence" value="ECO:0007669"/>
    <property type="project" value="UniProtKB-UniRule"/>
</dbReference>
<dbReference type="CDD" id="cd03109">
    <property type="entry name" value="DTBS"/>
    <property type="match status" value="1"/>
</dbReference>
<dbReference type="FunFam" id="3.40.50.300:FF:000292">
    <property type="entry name" value="ATP-dependent dethiobiotin synthetase BioD"/>
    <property type="match status" value="1"/>
</dbReference>
<dbReference type="Gene3D" id="3.40.50.300">
    <property type="entry name" value="P-loop containing nucleotide triphosphate hydrolases"/>
    <property type="match status" value="1"/>
</dbReference>
<dbReference type="HAMAP" id="MF_00336">
    <property type="entry name" value="BioD"/>
    <property type="match status" value="1"/>
</dbReference>
<dbReference type="InterPro" id="IPR004472">
    <property type="entry name" value="DTB_synth_BioD"/>
</dbReference>
<dbReference type="InterPro" id="IPR027417">
    <property type="entry name" value="P-loop_NTPase"/>
</dbReference>
<dbReference type="NCBIfam" id="TIGR00347">
    <property type="entry name" value="bioD"/>
    <property type="match status" value="1"/>
</dbReference>
<dbReference type="PANTHER" id="PTHR43210">
    <property type="entry name" value="DETHIOBIOTIN SYNTHETASE"/>
    <property type="match status" value="1"/>
</dbReference>
<dbReference type="PANTHER" id="PTHR43210:SF5">
    <property type="entry name" value="DETHIOBIOTIN SYNTHETASE"/>
    <property type="match status" value="1"/>
</dbReference>
<dbReference type="Pfam" id="PF13500">
    <property type="entry name" value="AAA_26"/>
    <property type="match status" value="1"/>
</dbReference>
<dbReference type="PIRSF" id="PIRSF006755">
    <property type="entry name" value="DTB_synth"/>
    <property type="match status" value="1"/>
</dbReference>
<dbReference type="SUPFAM" id="SSF52540">
    <property type="entry name" value="P-loop containing nucleoside triphosphate hydrolases"/>
    <property type="match status" value="1"/>
</dbReference>
<protein>
    <recommendedName>
        <fullName evidence="1">ATP-dependent dethiobiotin synthetase BioD</fullName>
        <ecNumber evidence="1">6.3.3.3</ecNumber>
    </recommendedName>
    <alternativeName>
        <fullName evidence="1">DTB synthetase</fullName>
        <shortName evidence="1">DTBS</shortName>
    </alternativeName>
    <alternativeName>
        <fullName evidence="1">Dethiobiotin synthase</fullName>
    </alternativeName>
</protein>
<organism>
    <name type="scientific">Burkholderia pseudomallei (strain 1710b)</name>
    <dbReference type="NCBI Taxonomy" id="320372"/>
    <lineage>
        <taxon>Bacteria</taxon>
        <taxon>Pseudomonadati</taxon>
        <taxon>Pseudomonadota</taxon>
        <taxon>Betaproteobacteria</taxon>
        <taxon>Burkholderiales</taxon>
        <taxon>Burkholderiaceae</taxon>
        <taxon>Burkholderia</taxon>
        <taxon>pseudomallei group</taxon>
    </lineage>
</organism>
<evidence type="ECO:0000255" key="1">
    <source>
        <dbReference type="HAMAP-Rule" id="MF_00336"/>
    </source>
</evidence>
<name>BIOD_BURP1</name>
<feature type="chain" id="PRO_0000302492" description="ATP-dependent dethiobiotin synthetase BioD">
    <location>
        <begin position="1"/>
        <end position="240"/>
    </location>
</feature>
<feature type="active site" evidence="1">
    <location>
        <position position="40"/>
    </location>
</feature>
<feature type="binding site" evidence="1">
    <location>
        <begin position="15"/>
        <end position="20"/>
    </location>
    <ligand>
        <name>ATP</name>
        <dbReference type="ChEBI" id="CHEBI:30616"/>
    </ligand>
</feature>
<feature type="binding site" evidence="1">
    <location>
        <position position="19"/>
    </location>
    <ligand>
        <name>Mg(2+)</name>
        <dbReference type="ChEBI" id="CHEBI:18420"/>
    </ligand>
</feature>
<feature type="binding site" evidence="1">
    <location>
        <position position="57"/>
    </location>
    <ligand>
        <name>ATP</name>
        <dbReference type="ChEBI" id="CHEBI:30616"/>
    </ligand>
</feature>
<feature type="binding site" evidence="1">
    <location>
        <position position="57"/>
    </location>
    <ligand>
        <name>Mg(2+)</name>
        <dbReference type="ChEBI" id="CHEBI:18420"/>
    </ligand>
</feature>
<feature type="binding site" evidence="1">
    <location>
        <begin position="118"/>
        <end position="121"/>
    </location>
    <ligand>
        <name>ATP</name>
        <dbReference type="ChEBI" id="CHEBI:30616"/>
    </ligand>
</feature>
<feature type="binding site" evidence="1">
    <location>
        <position position="118"/>
    </location>
    <ligand>
        <name>Mg(2+)</name>
        <dbReference type="ChEBI" id="CHEBI:18420"/>
    </ligand>
</feature>
<feature type="binding site" evidence="1">
    <location>
        <begin position="178"/>
        <end position="179"/>
    </location>
    <ligand>
        <name>ATP</name>
        <dbReference type="ChEBI" id="CHEBI:30616"/>
    </ligand>
</feature>
<reference key="1">
    <citation type="journal article" date="2010" name="Genome Biol. Evol.">
        <title>Continuing evolution of Burkholderia mallei through genome reduction and large-scale rearrangements.</title>
        <authorList>
            <person name="Losada L."/>
            <person name="Ronning C.M."/>
            <person name="DeShazer D."/>
            <person name="Woods D."/>
            <person name="Fedorova N."/>
            <person name="Kim H.S."/>
            <person name="Shabalina S.A."/>
            <person name="Pearson T.R."/>
            <person name="Brinkac L."/>
            <person name="Tan P."/>
            <person name="Nandi T."/>
            <person name="Crabtree J."/>
            <person name="Badger J."/>
            <person name="Beckstrom-Sternberg S."/>
            <person name="Saqib M."/>
            <person name="Schutzer S.E."/>
            <person name="Keim P."/>
            <person name="Nierman W.C."/>
        </authorList>
    </citation>
    <scope>NUCLEOTIDE SEQUENCE [LARGE SCALE GENOMIC DNA]</scope>
    <source>
        <strain>1710b</strain>
    </source>
</reference>